<name>RS20_AERSA</name>
<feature type="chain" id="PRO_0000167906" description="Small ribosomal subunit protein bS20">
    <location>
        <begin position="1" status="less than"/>
        <end position="72" status="greater than"/>
    </location>
</feature>
<feature type="non-terminal residue">
    <location>
        <position position="1"/>
    </location>
</feature>
<feature type="non-terminal residue">
    <location>
        <position position="72"/>
    </location>
</feature>
<organism>
    <name type="scientific">Aeromonas salmonicida</name>
    <dbReference type="NCBI Taxonomy" id="645"/>
    <lineage>
        <taxon>Bacteria</taxon>
        <taxon>Pseudomonadati</taxon>
        <taxon>Pseudomonadota</taxon>
        <taxon>Gammaproteobacteria</taxon>
        <taxon>Aeromonadales</taxon>
        <taxon>Aeromonadaceae</taxon>
        <taxon>Aeromonas</taxon>
    </lineage>
</organism>
<evidence type="ECO:0000250" key="1"/>
<evidence type="ECO:0000305" key="2"/>
<reference key="1">
    <citation type="journal article" date="1995" name="Biochim. Biophys. Acta">
        <title>Conserved amino acid residues in the primary structure of ribosomal protein S20 from selected Gram-negative bacteria.</title>
        <authorList>
            <person name="Nemec A."/>
            <person name="Haywood-Farmer A."/>
            <person name="Mackie G.A."/>
        </authorList>
    </citation>
    <scope>NUCLEOTIDE SEQUENCE [GENOMIC DNA]</scope>
</reference>
<keyword id="KW-0687">Ribonucleoprotein</keyword>
<keyword id="KW-0689">Ribosomal protein</keyword>
<keyword id="KW-0694">RNA-binding</keyword>
<keyword id="KW-0699">rRNA-binding</keyword>
<dbReference type="EMBL" id="U20495">
    <property type="protein sequence ID" value="AAA86998.1"/>
    <property type="molecule type" value="Genomic_DNA"/>
</dbReference>
<dbReference type="PIR" id="S58764">
    <property type="entry name" value="S58764"/>
</dbReference>
<dbReference type="SMR" id="P45787"/>
<dbReference type="STRING" id="1233098.GCA_000315855_00960"/>
<dbReference type="GO" id="GO:0005829">
    <property type="term" value="C:cytosol"/>
    <property type="evidence" value="ECO:0007669"/>
    <property type="project" value="TreeGrafter"/>
</dbReference>
<dbReference type="GO" id="GO:0015935">
    <property type="term" value="C:small ribosomal subunit"/>
    <property type="evidence" value="ECO:0007669"/>
    <property type="project" value="TreeGrafter"/>
</dbReference>
<dbReference type="GO" id="GO:0070181">
    <property type="term" value="F:small ribosomal subunit rRNA binding"/>
    <property type="evidence" value="ECO:0007669"/>
    <property type="project" value="TreeGrafter"/>
</dbReference>
<dbReference type="GO" id="GO:0003735">
    <property type="term" value="F:structural constituent of ribosome"/>
    <property type="evidence" value="ECO:0007669"/>
    <property type="project" value="InterPro"/>
</dbReference>
<dbReference type="GO" id="GO:0006412">
    <property type="term" value="P:translation"/>
    <property type="evidence" value="ECO:0007669"/>
    <property type="project" value="InterPro"/>
</dbReference>
<dbReference type="FunFam" id="1.20.58.110:FF:000001">
    <property type="entry name" value="30S ribosomal protein S20"/>
    <property type="match status" value="1"/>
</dbReference>
<dbReference type="Gene3D" id="1.20.58.110">
    <property type="entry name" value="Ribosomal protein S20"/>
    <property type="match status" value="1"/>
</dbReference>
<dbReference type="InterPro" id="IPR002583">
    <property type="entry name" value="Ribosomal_bS20"/>
</dbReference>
<dbReference type="InterPro" id="IPR036510">
    <property type="entry name" value="Ribosomal_bS20_sf"/>
</dbReference>
<dbReference type="NCBIfam" id="TIGR00029">
    <property type="entry name" value="S20"/>
    <property type="match status" value="1"/>
</dbReference>
<dbReference type="PANTHER" id="PTHR33398">
    <property type="entry name" value="30S RIBOSOMAL PROTEIN S20"/>
    <property type="match status" value="1"/>
</dbReference>
<dbReference type="PANTHER" id="PTHR33398:SF1">
    <property type="entry name" value="SMALL RIBOSOMAL SUBUNIT PROTEIN BS20C"/>
    <property type="match status" value="1"/>
</dbReference>
<dbReference type="Pfam" id="PF01649">
    <property type="entry name" value="Ribosomal_S20p"/>
    <property type="match status" value="1"/>
</dbReference>
<dbReference type="SUPFAM" id="SSF46992">
    <property type="entry name" value="Ribosomal protein S20"/>
    <property type="match status" value="1"/>
</dbReference>
<sequence length="72" mass="7972">KRAIQSEKRRQHNASRRSMTRTYLKKVIAAIASGDKAAAVAAFATAQPIMDRMATKGLIHKNKAARHKSRLS</sequence>
<protein>
    <recommendedName>
        <fullName evidence="2">Small ribosomal subunit protein bS20</fullName>
    </recommendedName>
    <alternativeName>
        <fullName>30S ribosomal protein S20</fullName>
    </alternativeName>
</protein>
<accession>P45787</accession>
<proteinExistence type="inferred from homology"/>
<comment type="function">
    <text evidence="1">Binds directly to 16S ribosomal RNA.</text>
</comment>
<comment type="similarity">
    <text evidence="2">Belongs to the bacterial ribosomal protein bS20 family.</text>
</comment>
<gene>
    <name type="primary">rpsT</name>
</gene>